<accession>A4WFD8</accession>
<organism>
    <name type="scientific">Enterobacter sp. (strain 638)</name>
    <dbReference type="NCBI Taxonomy" id="399742"/>
    <lineage>
        <taxon>Bacteria</taxon>
        <taxon>Pseudomonadati</taxon>
        <taxon>Pseudomonadota</taxon>
        <taxon>Gammaproteobacteria</taxon>
        <taxon>Enterobacterales</taxon>
        <taxon>Enterobacteriaceae</taxon>
        <taxon>Enterobacter</taxon>
    </lineage>
</organism>
<dbReference type="EC" id="2.8.1.-" evidence="1"/>
<dbReference type="EMBL" id="CP000653">
    <property type="protein sequence ID" value="ABP62418.1"/>
    <property type="molecule type" value="Genomic_DNA"/>
</dbReference>
<dbReference type="RefSeq" id="WP_015960724.1">
    <property type="nucleotide sequence ID" value="NC_009436.1"/>
</dbReference>
<dbReference type="SMR" id="A4WFD8"/>
<dbReference type="STRING" id="399742.Ent638_3762"/>
<dbReference type="KEGG" id="ent:Ent638_3762"/>
<dbReference type="eggNOG" id="COG1553">
    <property type="taxonomic scope" value="Bacteria"/>
</dbReference>
<dbReference type="HOGENOM" id="CLU_132095_0_0_6"/>
<dbReference type="OrthoDB" id="9787483at2"/>
<dbReference type="Proteomes" id="UP000000230">
    <property type="component" value="Chromosome"/>
</dbReference>
<dbReference type="GO" id="GO:1990228">
    <property type="term" value="C:sulfurtransferase complex"/>
    <property type="evidence" value="ECO:0007669"/>
    <property type="project" value="TreeGrafter"/>
</dbReference>
<dbReference type="GO" id="GO:0097163">
    <property type="term" value="F:sulfur carrier activity"/>
    <property type="evidence" value="ECO:0007669"/>
    <property type="project" value="TreeGrafter"/>
</dbReference>
<dbReference type="GO" id="GO:0016783">
    <property type="term" value="F:sulfurtransferase activity"/>
    <property type="evidence" value="ECO:0007669"/>
    <property type="project" value="UniProtKB-UniRule"/>
</dbReference>
<dbReference type="GO" id="GO:0002143">
    <property type="term" value="P:tRNA wobble position uridine thiolation"/>
    <property type="evidence" value="ECO:0007669"/>
    <property type="project" value="TreeGrafter"/>
</dbReference>
<dbReference type="FunFam" id="3.40.1260.10:FF:000001">
    <property type="entry name" value="Sulfurtransferase TusD"/>
    <property type="match status" value="1"/>
</dbReference>
<dbReference type="Gene3D" id="3.40.1260.10">
    <property type="entry name" value="DsrEFH-like"/>
    <property type="match status" value="1"/>
</dbReference>
<dbReference type="HAMAP" id="MF_00390">
    <property type="entry name" value="Thiourid_synth_D"/>
    <property type="match status" value="1"/>
</dbReference>
<dbReference type="InterPro" id="IPR027396">
    <property type="entry name" value="DsrEFH-like"/>
</dbReference>
<dbReference type="InterPro" id="IPR003787">
    <property type="entry name" value="Sulphur_relay_DsrE/F-like"/>
</dbReference>
<dbReference type="InterPro" id="IPR017463">
    <property type="entry name" value="Sulphur_relay_TusD/DsrE"/>
</dbReference>
<dbReference type="NCBIfam" id="NF001237">
    <property type="entry name" value="PRK00207.1"/>
    <property type="match status" value="1"/>
</dbReference>
<dbReference type="NCBIfam" id="TIGR03012">
    <property type="entry name" value="sulf_tusD_dsrE"/>
    <property type="match status" value="1"/>
</dbReference>
<dbReference type="PANTHER" id="PTHR34874">
    <property type="entry name" value="PROTEIN YCHN"/>
    <property type="match status" value="1"/>
</dbReference>
<dbReference type="PANTHER" id="PTHR34874:SF3">
    <property type="entry name" value="SULFURTRANSFERASE TUSD"/>
    <property type="match status" value="1"/>
</dbReference>
<dbReference type="Pfam" id="PF02635">
    <property type="entry name" value="DsrE"/>
    <property type="match status" value="1"/>
</dbReference>
<dbReference type="SUPFAM" id="SSF75169">
    <property type="entry name" value="DsrEFH-like"/>
    <property type="match status" value="1"/>
</dbReference>
<sequence length="128" mass="13758">MRFALMVTGPAYGTQQASSALQFAQAVLAEGHELSSVFFYREGVYNANQFTSPASDEYDLVRGWQALNETQGVELHICVAAALRRGVADETEAKRLGLSGANLQHGFTLSGLGALAQAALTCDRMVQF</sequence>
<gene>
    <name evidence="1" type="primary">tusD</name>
    <name type="ordered locus">Ent638_3762</name>
</gene>
<reference key="1">
    <citation type="journal article" date="2010" name="PLoS Genet.">
        <title>Genome sequence of the plant growth promoting endophytic bacterium Enterobacter sp. 638.</title>
        <authorList>
            <person name="Taghavi S."/>
            <person name="van der Lelie D."/>
            <person name="Hoffman A."/>
            <person name="Zhang Y.B."/>
            <person name="Walla M.D."/>
            <person name="Vangronsveld J."/>
            <person name="Newman L."/>
            <person name="Monchy S."/>
        </authorList>
    </citation>
    <scope>NUCLEOTIDE SEQUENCE [LARGE SCALE GENOMIC DNA]</scope>
    <source>
        <strain>638</strain>
    </source>
</reference>
<protein>
    <recommendedName>
        <fullName evidence="1">Sulfurtransferase TusD</fullName>
        <ecNumber evidence="1">2.8.1.-</ecNumber>
    </recommendedName>
    <alternativeName>
        <fullName evidence="1">tRNA 2-thiouridine synthesizing protein D</fullName>
    </alternativeName>
</protein>
<proteinExistence type="inferred from homology"/>
<keyword id="KW-0963">Cytoplasm</keyword>
<keyword id="KW-0808">Transferase</keyword>
<keyword id="KW-0819">tRNA processing</keyword>
<name>TUSD_ENT38</name>
<comment type="function">
    <text evidence="1">Part of a sulfur-relay system required for 2-thiolation of 5-methylaminomethyl-2-thiouridine (mnm(5)s(2)U) at tRNA wobble positions. Accepts sulfur from TusA and transfers it in turn to TusE.</text>
</comment>
<comment type="subunit">
    <text evidence="1">Heterohexamer, formed by a dimer of trimers. The hexameric TusBCD complex contains 2 copies each of TusB, TusC and TusD. The TusBCD complex interacts with TusE.</text>
</comment>
<comment type="subcellular location">
    <subcellularLocation>
        <location evidence="1">Cytoplasm</location>
    </subcellularLocation>
</comment>
<comment type="similarity">
    <text evidence="1">Belongs to the DsrE/TusD family.</text>
</comment>
<feature type="chain" id="PRO_1000060748" description="Sulfurtransferase TusD">
    <location>
        <begin position="1"/>
        <end position="128"/>
    </location>
</feature>
<feature type="active site" description="Cysteine persulfide intermediate" evidence="1">
    <location>
        <position position="78"/>
    </location>
</feature>
<evidence type="ECO:0000255" key="1">
    <source>
        <dbReference type="HAMAP-Rule" id="MF_00390"/>
    </source>
</evidence>